<protein>
    <recommendedName>
        <fullName evidence="3">Y+L amino acid transporter 2</fullName>
    </recommendedName>
    <alternativeName>
        <fullName>Solute carrier family 7 member 6</fullName>
        <shortName>zfSlc7a6</shortName>
    </alternativeName>
    <alternativeName>
        <fullName>y(+)L-type amino acid transporter 2</fullName>
        <shortName>Y+LAT2</shortName>
        <shortName>y+LAT-2</shortName>
    </alternativeName>
</protein>
<organism>
    <name type="scientific">Danio rerio</name>
    <name type="common">Zebrafish</name>
    <name type="synonym">Brachydanio rerio</name>
    <dbReference type="NCBI Taxonomy" id="7955"/>
    <lineage>
        <taxon>Eukaryota</taxon>
        <taxon>Metazoa</taxon>
        <taxon>Chordata</taxon>
        <taxon>Craniata</taxon>
        <taxon>Vertebrata</taxon>
        <taxon>Euteleostomi</taxon>
        <taxon>Actinopterygii</taxon>
        <taxon>Neopterygii</taxon>
        <taxon>Teleostei</taxon>
        <taxon>Ostariophysi</taxon>
        <taxon>Cypriniformes</taxon>
        <taxon>Danionidae</taxon>
        <taxon>Danioninae</taxon>
        <taxon>Danio</taxon>
    </lineage>
</organism>
<keyword id="KW-0029">Amino-acid transport</keyword>
<keyword id="KW-1003">Cell membrane</keyword>
<keyword id="KW-0472">Membrane</keyword>
<keyword id="KW-1185">Reference proteome</keyword>
<keyword id="KW-0812">Transmembrane</keyword>
<keyword id="KW-1133">Transmembrane helix</keyword>
<keyword id="KW-0813">Transport</keyword>
<sequence length="468" mass="51234">MQLKKEISLLNGVSLIVGNMIGSGIFVSPKGVLIYSASYGLSLVIWAIGGIFSVVGALCYAELGTTITKSGASYAYILESFGGFIAFIRLWTSLLIIEPTSQAVIAITFANYLVQPLFPTCEPPYSASRLIAAACICLLTFINSAYVKWGTRVQDVFTYAKVLALIVIIITGIVKLCQGFTINFEDSFQGSSRDPGGIALALYSALFSYSGWDTLNFVTEEIKNPERNLPLSIAISMPIVTIIYILTNVAYYAVLDMSAILASDAVAVTFADHTLGVMSWTIPIAVALSCYGGLNSSIIAASRLFFVGAREGHLPDALSMIHIERFTPVPALLFNCAMALIYLTVEDVFQLINYYSFSYWFFVGLSIAGQIYLRWKEPDRPRPLKLSLVYPIIFCLCVVFLVAVPLYSDTLNTLIGIAIALSGVPVYFLGIHLPESKRPPIITKLLSAITRFTQFTCFYVLTEMDTVD</sequence>
<gene>
    <name evidence="6" type="primary">slc7a6</name>
</gene>
<proteinExistence type="evidence at transcript level"/>
<name>YLAT2_DANRE</name>
<dbReference type="EMBL" id="AB193556">
    <property type="protein sequence ID" value="BAD91397.1"/>
    <property type="molecule type" value="mRNA"/>
</dbReference>
<dbReference type="RefSeq" id="NP_001018310.1">
    <property type="nucleotide sequence ID" value="NM_001020474.1"/>
</dbReference>
<dbReference type="SMR" id="Q59I64"/>
<dbReference type="FunCoup" id="Q59I64">
    <property type="interactions" value="18"/>
</dbReference>
<dbReference type="STRING" id="7955.ENSDARP00000124849"/>
<dbReference type="PaxDb" id="7955-ENSDARP00000124849"/>
<dbReference type="GeneID" id="57957"/>
<dbReference type="KEGG" id="dre:57957"/>
<dbReference type="AGR" id="ZFIN:ZDB-GENE-000607-21"/>
<dbReference type="CTD" id="9057"/>
<dbReference type="ZFIN" id="ZDB-GENE-000607-21">
    <property type="gene designation" value="slc7a6"/>
</dbReference>
<dbReference type="eggNOG" id="KOG1287">
    <property type="taxonomic scope" value="Eukaryota"/>
</dbReference>
<dbReference type="InParanoid" id="Q59I64"/>
<dbReference type="OrthoDB" id="10062876at2759"/>
<dbReference type="PhylomeDB" id="Q59I64"/>
<dbReference type="Reactome" id="R-DRE-352230">
    <property type="pathway name" value="Amino acid transport across the plasma membrane"/>
</dbReference>
<dbReference type="PRO" id="PR:Q59I64"/>
<dbReference type="Proteomes" id="UP000000437">
    <property type="component" value="Chromosome 7"/>
</dbReference>
<dbReference type="GO" id="GO:0005886">
    <property type="term" value="C:plasma membrane"/>
    <property type="evidence" value="ECO:0007669"/>
    <property type="project" value="UniProtKB-SubCell"/>
</dbReference>
<dbReference type="GO" id="GO:0034618">
    <property type="term" value="F:arginine binding"/>
    <property type="evidence" value="ECO:0000250"/>
    <property type="project" value="UniProtKB"/>
</dbReference>
<dbReference type="GO" id="GO:0015179">
    <property type="term" value="F:L-amino acid transmembrane transporter activity"/>
    <property type="evidence" value="ECO:0000318"/>
    <property type="project" value="GO_Central"/>
</dbReference>
<dbReference type="GO" id="GO:0061459">
    <property type="term" value="F:L-arginine transmembrane transporter activity"/>
    <property type="evidence" value="ECO:0000250"/>
    <property type="project" value="UniProtKB"/>
</dbReference>
<dbReference type="GO" id="GO:0106439">
    <property type="term" value="F:L-lysine:L-arginine antiporter activity"/>
    <property type="evidence" value="ECO:0000250"/>
    <property type="project" value="UniProtKB"/>
</dbReference>
<dbReference type="GO" id="GO:0003333">
    <property type="term" value="P:amino acid transmembrane transport"/>
    <property type="evidence" value="ECO:0000318"/>
    <property type="project" value="GO_Central"/>
</dbReference>
<dbReference type="GO" id="GO:0031460">
    <property type="term" value="P:glycine betaine transport"/>
    <property type="evidence" value="ECO:0000250"/>
    <property type="project" value="UniProtKB"/>
</dbReference>
<dbReference type="GO" id="GO:1903826">
    <property type="term" value="P:L-arginine transmembrane transport"/>
    <property type="evidence" value="ECO:0000250"/>
    <property type="project" value="UniProtKB"/>
</dbReference>
<dbReference type="GO" id="GO:0015804">
    <property type="term" value="P:neutral amino acid transport"/>
    <property type="evidence" value="ECO:0000250"/>
    <property type="project" value="UniProtKB"/>
</dbReference>
<dbReference type="GO" id="GO:0006809">
    <property type="term" value="P:nitric oxide biosynthetic process"/>
    <property type="evidence" value="ECO:0000250"/>
    <property type="project" value="UniProtKB"/>
</dbReference>
<dbReference type="FunFam" id="1.20.1740.10:FF:000003">
    <property type="entry name" value="Y+L amino acid transporter 1 isoform X1"/>
    <property type="match status" value="1"/>
</dbReference>
<dbReference type="Gene3D" id="1.20.1740.10">
    <property type="entry name" value="Amino acid/polyamine transporter I"/>
    <property type="match status" value="1"/>
</dbReference>
<dbReference type="InterPro" id="IPR002293">
    <property type="entry name" value="AA/rel_permease1"/>
</dbReference>
<dbReference type="InterPro" id="IPR050598">
    <property type="entry name" value="AminoAcid_Transporter"/>
</dbReference>
<dbReference type="PANTHER" id="PTHR11785">
    <property type="entry name" value="AMINO ACID TRANSPORTER"/>
    <property type="match status" value="1"/>
</dbReference>
<dbReference type="PANTHER" id="PTHR11785:SF398">
    <property type="entry name" value="Y+L AMINO ACID TRANSPORTER 2"/>
    <property type="match status" value="1"/>
</dbReference>
<dbReference type="Pfam" id="PF13520">
    <property type="entry name" value="AA_permease_2"/>
    <property type="match status" value="1"/>
</dbReference>
<dbReference type="PIRSF" id="PIRSF006060">
    <property type="entry name" value="AA_transporter"/>
    <property type="match status" value="1"/>
</dbReference>
<feature type="chain" id="PRO_0000341479" description="Y+L amino acid transporter 2">
    <location>
        <begin position="1"/>
        <end position="468"/>
    </location>
</feature>
<feature type="topological domain" description="Cytoplasmic" evidence="4">
    <location>
        <begin position="1"/>
        <end position="6"/>
    </location>
</feature>
<feature type="transmembrane region" description="Helical" evidence="4">
    <location>
        <begin position="7"/>
        <end position="27"/>
    </location>
</feature>
<feature type="topological domain" description="Extracellular" evidence="4">
    <location>
        <begin position="28"/>
        <end position="40"/>
    </location>
</feature>
<feature type="transmembrane region" description="Helical" evidence="4">
    <location>
        <begin position="41"/>
        <end position="61"/>
    </location>
</feature>
<feature type="topological domain" description="Cytoplasmic" evidence="4">
    <location>
        <begin position="62"/>
        <end position="76"/>
    </location>
</feature>
<feature type="transmembrane region" description="Helical" evidence="4">
    <location>
        <begin position="77"/>
        <end position="97"/>
    </location>
</feature>
<feature type="topological domain" description="Extracellular" evidence="4">
    <location>
        <begin position="98"/>
        <end position="129"/>
    </location>
</feature>
<feature type="transmembrane region" description="Helical" evidence="4">
    <location>
        <begin position="130"/>
        <end position="150"/>
    </location>
</feature>
<feature type="topological domain" description="Cytoplasmic" evidence="4">
    <location>
        <begin position="151"/>
        <end position="161"/>
    </location>
</feature>
<feature type="transmembrane region" description="Helical" evidence="4">
    <location>
        <begin position="162"/>
        <end position="182"/>
    </location>
</feature>
<feature type="topological domain" description="Extracellular" evidence="4">
    <location>
        <begin position="183"/>
        <end position="197"/>
    </location>
</feature>
<feature type="transmembrane region" description="Helical" evidence="4">
    <location>
        <begin position="198"/>
        <end position="218"/>
    </location>
</feature>
<feature type="topological domain" description="Cytoplasmic" evidence="4">
    <location>
        <begin position="219"/>
        <end position="228"/>
    </location>
</feature>
<feature type="transmembrane region" description="Helical" evidence="4">
    <location>
        <begin position="229"/>
        <end position="249"/>
    </location>
</feature>
<feature type="topological domain" description="Extracellular" evidence="4">
    <location>
        <begin position="250"/>
        <end position="273"/>
    </location>
</feature>
<feature type="transmembrane region" description="Helical" evidence="4">
    <location>
        <begin position="274"/>
        <end position="294"/>
    </location>
</feature>
<feature type="topological domain" description="Cytoplasmic" evidence="4">
    <location>
        <begin position="295"/>
        <end position="325"/>
    </location>
</feature>
<feature type="transmembrane region" description="Helical" evidence="4">
    <location>
        <begin position="326"/>
        <end position="346"/>
    </location>
</feature>
<feature type="topological domain" description="Extracellular" evidence="4">
    <location>
        <position position="347"/>
    </location>
</feature>
<feature type="transmembrane region" description="Helical" evidence="4">
    <location>
        <begin position="348"/>
        <end position="368"/>
    </location>
</feature>
<feature type="topological domain" description="Cytoplasmic" evidence="4">
    <location>
        <begin position="369"/>
        <end position="385"/>
    </location>
</feature>
<feature type="transmembrane region" description="Helical" evidence="4">
    <location>
        <begin position="386"/>
        <end position="406"/>
    </location>
</feature>
<feature type="topological domain" description="Extracellular" evidence="4">
    <location>
        <begin position="407"/>
        <end position="413"/>
    </location>
</feature>
<feature type="transmembrane region" description="Helical" evidence="4">
    <location>
        <begin position="414"/>
        <end position="434"/>
    </location>
</feature>
<feature type="topological domain" description="Cytoplasmic" evidence="4">
    <location>
        <begin position="435"/>
        <end position="468"/>
    </location>
</feature>
<reference evidence="5" key="1">
    <citation type="journal article" date="2005" name="Curr. Biol.">
        <title>The zebrafish-secreted matrix protein You/Scube2 is implicated in long-range regulation of hedgehog signaling.</title>
        <authorList>
            <person name="Kawakami A."/>
            <person name="Nojima Y."/>
            <person name="Toyoda A."/>
            <person name="Takahoko M."/>
            <person name="Satoh M."/>
            <person name="Tanaka H."/>
            <person name="Wada H."/>
            <person name="Masai I."/>
            <person name="Terasaki H."/>
            <person name="Sakaki Y."/>
            <person name="Takeda H."/>
            <person name="Okamoto H."/>
        </authorList>
    </citation>
    <scope>NUCLEOTIDE SEQUENCE [MRNA]</scope>
</reference>
<accession>Q59I64</accession>
<evidence type="ECO:0000250" key="1">
    <source>
        <dbReference type="UniProtKB" id="D3ZMM8"/>
    </source>
</evidence>
<evidence type="ECO:0000250" key="2">
    <source>
        <dbReference type="UniProtKB" id="Q8BGK6"/>
    </source>
</evidence>
<evidence type="ECO:0000250" key="3">
    <source>
        <dbReference type="UniProtKB" id="Q92536"/>
    </source>
</evidence>
<evidence type="ECO:0000255" key="4"/>
<evidence type="ECO:0000312" key="5">
    <source>
        <dbReference type="EMBL" id="BAD91397.1"/>
    </source>
</evidence>
<evidence type="ECO:0000312" key="6">
    <source>
        <dbReference type="ZFIN" id="ZDB-GENE-000607-21"/>
    </source>
</evidence>
<comment type="function">
    <text evidence="1 2 3">Heterodimer with SLC3A2, that functions as an antiporter which operates as an efflux route by exporting cationic amino acids such as L-arginine from inside the cells in exchange with neutral amino acids like L-leucine, L-glutamine and isoleucine, plus sodium ions and may participate in nitric oxide synthesis. Also exchanges L-arginine with L-lysine in a sodium-independent manner. The transport mechanism is electroneutral and operates with a stoichiometry of 1:1 (By similarity). Contributes to ammonia-induced increase of L-arginine uptake in cerebral cortical astrocytes leading to ammonia-dependent increase of nitric oxide (NO) production via inducible nitric oxide synthase (iNOS) induction, and protein nitration (By similarity). May mediate transport of ornithine in retinal pigment epithelial (RPE) cells (By similarity). May also transport glycine betaine in a sodium dependent manner from the cumulus granulosa into the enclosed oocyte (By similarity).</text>
</comment>
<comment type="catalytic activity">
    <reaction evidence="3">
        <text>L-lysine(out) + L-arginine(in) = L-lysine(in) + L-arginine(out)</text>
        <dbReference type="Rhea" id="RHEA:70827"/>
        <dbReference type="ChEBI" id="CHEBI:32551"/>
        <dbReference type="ChEBI" id="CHEBI:32682"/>
    </reaction>
</comment>
<comment type="catalytic activity">
    <reaction evidence="3">
        <text>L-leucine(out) + L-arginine(in) + Na(+)(out) = L-leucine(in) + L-arginine(out) + Na(+)(in)</text>
        <dbReference type="Rhea" id="RHEA:70831"/>
        <dbReference type="ChEBI" id="CHEBI:29101"/>
        <dbReference type="ChEBI" id="CHEBI:32682"/>
        <dbReference type="ChEBI" id="CHEBI:57427"/>
    </reaction>
</comment>
<comment type="catalytic activity">
    <reaction evidence="3">
        <text>L-glutamine(out) + L-arginine(in) + Na(+)(out) = L-glutamine(in) + L-arginine(out) + Na(+)(in)</text>
        <dbReference type="Rhea" id="RHEA:70835"/>
        <dbReference type="ChEBI" id="CHEBI:29101"/>
        <dbReference type="ChEBI" id="CHEBI:32682"/>
        <dbReference type="ChEBI" id="CHEBI:58359"/>
    </reaction>
</comment>
<comment type="catalytic activity">
    <reaction evidence="3">
        <text>L-histidine(out) + L-arginine(in) + Na(+)(out) = L-histidine(in) + L-arginine(out) + Na(+)(in)</text>
        <dbReference type="Rhea" id="RHEA:70839"/>
        <dbReference type="ChEBI" id="CHEBI:29101"/>
        <dbReference type="ChEBI" id="CHEBI:32682"/>
        <dbReference type="ChEBI" id="CHEBI:57595"/>
    </reaction>
</comment>
<comment type="catalytic activity">
    <reaction evidence="3">
        <text>L-cysteine(out) + L-arginine(in) + Na(+)(out) = L-cysteine(in) + L-arginine(out) + Na(+)(in)</text>
        <dbReference type="Rhea" id="RHEA:70847"/>
        <dbReference type="ChEBI" id="CHEBI:29101"/>
        <dbReference type="ChEBI" id="CHEBI:32682"/>
        <dbReference type="ChEBI" id="CHEBI:35235"/>
    </reaction>
</comment>
<comment type="catalytic activity">
    <reaction evidence="3">
        <text>L-arginine(in) + L-methionine(out) + Na(+)(out) = L-arginine(out) + L-methionine(in) + Na(+)(in)</text>
        <dbReference type="Rhea" id="RHEA:70843"/>
        <dbReference type="ChEBI" id="CHEBI:29101"/>
        <dbReference type="ChEBI" id="CHEBI:32682"/>
        <dbReference type="ChEBI" id="CHEBI:57844"/>
    </reaction>
</comment>
<comment type="subunit">
    <text evidence="3">Disulfide-linked heterodimer with the amino acid transport protein SLC3A2/4F2hc.</text>
</comment>
<comment type="subcellular location">
    <subcellularLocation>
        <location evidence="3">Cell membrane</location>
        <topology evidence="4">Multi-pass membrane protein</topology>
    </subcellularLocation>
</comment>
<comment type="similarity">
    <text evidence="4">Belongs to the amino acid-polyamine-organocation (APC) superfamily. L-type amino acid transporter (LAT) (TC 2.A.3.8) family.</text>
</comment>